<comment type="function">
    <text evidence="1">Could be part of a sulfur-relay system.</text>
</comment>
<comment type="subcellular location">
    <subcellularLocation>
        <location evidence="1">Cytoplasm</location>
    </subcellularLocation>
</comment>
<comment type="similarity">
    <text evidence="2">Belongs to the DsrF/TusC family.</text>
</comment>
<keyword id="KW-0963">Cytoplasm</keyword>
<keyword id="KW-1185">Reference proteome</keyword>
<reference key="1">
    <citation type="journal article" date="1995" name="Science">
        <title>Whole-genome random sequencing and assembly of Haemophilus influenzae Rd.</title>
        <authorList>
            <person name="Fleischmann R.D."/>
            <person name="Adams M.D."/>
            <person name="White O."/>
            <person name="Clayton R.A."/>
            <person name="Kirkness E.F."/>
            <person name="Kerlavage A.R."/>
            <person name="Bult C.J."/>
            <person name="Tomb J.-F."/>
            <person name="Dougherty B.A."/>
            <person name="Merrick J.M."/>
            <person name="McKenney K."/>
            <person name="Sutton G.G."/>
            <person name="FitzHugh W."/>
            <person name="Fields C.A."/>
            <person name="Gocayne J.D."/>
            <person name="Scott J.D."/>
            <person name="Shirley R."/>
            <person name="Liu L.-I."/>
            <person name="Glodek A."/>
            <person name="Kelley J.M."/>
            <person name="Weidman J.F."/>
            <person name="Phillips C.A."/>
            <person name="Spriggs T."/>
            <person name="Hedblom E."/>
            <person name="Cotton M.D."/>
            <person name="Utterback T.R."/>
            <person name="Hanna M.C."/>
            <person name="Nguyen D.T."/>
            <person name="Saudek D.M."/>
            <person name="Brandon R.C."/>
            <person name="Fine L.D."/>
            <person name="Fritchman J.L."/>
            <person name="Fuhrmann J.L."/>
            <person name="Geoghagen N.S.M."/>
            <person name="Gnehm C.L."/>
            <person name="McDonald L.A."/>
            <person name="Small K.V."/>
            <person name="Fraser C.M."/>
            <person name="Smith H.O."/>
            <person name="Venter J.C."/>
        </authorList>
    </citation>
    <scope>NUCLEOTIDE SEQUENCE [LARGE SCALE GENOMIC DNA]</scope>
    <source>
        <strain>ATCC 51907 / DSM 11121 / KW20 / Rd</strain>
    </source>
</reference>
<reference key="2">
    <citation type="submission" date="1996-09" db="EMBL/GenBank/DDBJ databases">
        <authorList>
            <person name="White O."/>
            <person name="Clayton R.A."/>
            <person name="Kerlavage A.R."/>
            <person name="Fleischmann R.D."/>
        </authorList>
    </citation>
    <scope>SEQUENCE REVISION</scope>
</reference>
<protein>
    <recommendedName>
        <fullName>Protein TusC homolog</fullName>
    </recommendedName>
</protein>
<accession>Q57194</accession>
<accession>O05026</accession>
<evidence type="ECO:0000250" key="1"/>
<evidence type="ECO:0000305" key="2"/>
<dbReference type="EMBL" id="L42023">
    <property type="protein sequence ID" value="AAC22235.1"/>
    <property type="molecule type" value="Genomic_DNA"/>
</dbReference>
<dbReference type="RefSeq" id="NP_438734.1">
    <property type="nucleotide sequence ID" value="NC_000907.1"/>
</dbReference>
<dbReference type="SMR" id="Q57194"/>
<dbReference type="STRING" id="71421.HI_0576.1"/>
<dbReference type="EnsemblBacteria" id="AAC22235">
    <property type="protein sequence ID" value="AAC22235"/>
    <property type="gene ID" value="HI_0576.1"/>
</dbReference>
<dbReference type="KEGG" id="hin:HI_0576.1"/>
<dbReference type="PATRIC" id="fig|71421.8.peg.597"/>
<dbReference type="eggNOG" id="COG2923">
    <property type="taxonomic scope" value="Bacteria"/>
</dbReference>
<dbReference type="HOGENOM" id="CLU_155943_1_0_6"/>
<dbReference type="OrthoDB" id="9789418at2"/>
<dbReference type="PhylomeDB" id="Q57194"/>
<dbReference type="BioCyc" id="HINF71421:G1GJ1-589-MONOMER"/>
<dbReference type="Proteomes" id="UP000000579">
    <property type="component" value="Chromosome"/>
</dbReference>
<dbReference type="GO" id="GO:0005737">
    <property type="term" value="C:cytoplasm"/>
    <property type="evidence" value="ECO:0007669"/>
    <property type="project" value="UniProtKB-SubCell"/>
</dbReference>
<dbReference type="Gene3D" id="3.40.1260.10">
    <property type="entry name" value="DsrEFH-like"/>
    <property type="match status" value="1"/>
</dbReference>
<dbReference type="InterPro" id="IPR027396">
    <property type="entry name" value="DsrEFH-like"/>
</dbReference>
<dbReference type="InterPro" id="IPR003787">
    <property type="entry name" value="Sulphur_relay_DsrE/F-like"/>
</dbReference>
<dbReference type="InterPro" id="IPR017462">
    <property type="entry name" value="Sulphur_relay_TusC/DsrF"/>
</dbReference>
<dbReference type="NCBIfam" id="NF001238">
    <property type="entry name" value="PRK00211.1"/>
    <property type="match status" value="1"/>
</dbReference>
<dbReference type="NCBIfam" id="TIGR03010">
    <property type="entry name" value="sulf_tusC_dsrF"/>
    <property type="match status" value="1"/>
</dbReference>
<dbReference type="PANTHER" id="PTHR38780">
    <property type="entry name" value="PROTEIN TUSC"/>
    <property type="match status" value="1"/>
</dbReference>
<dbReference type="PANTHER" id="PTHR38780:SF1">
    <property type="entry name" value="PROTEIN TUSC"/>
    <property type="match status" value="1"/>
</dbReference>
<dbReference type="Pfam" id="PF02635">
    <property type="entry name" value="DsrE"/>
    <property type="match status" value="1"/>
</dbReference>
<dbReference type="SUPFAM" id="SSF75169">
    <property type="entry name" value="DsrEFH-like"/>
    <property type="match status" value="1"/>
</dbReference>
<organism>
    <name type="scientific">Haemophilus influenzae (strain ATCC 51907 / DSM 11121 / KW20 / Rd)</name>
    <dbReference type="NCBI Taxonomy" id="71421"/>
    <lineage>
        <taxon>Bacteria</taxon>
        <taxon>Pseudomonadati</taxon>
        <taxon>Pseudomonadota</taxon>
        <taxon>Gammaproteobacteria</taxon>
        <taxon>Pasteurellales</taxon>
        <taxon>Pasteurellaceae</taxon>
        <taxon>Haemophilus</taxon>
    </lineage>
</organism>
<sequence length="119" mass="13659">MKIAFLFRTSPHGTSISREGLDAILAATAFCEPNDIGIFFIDDGVLNLIDNQQPEIIQQKDFIRTFKLLDLYDVEQRFICTASLQKFKLDNRELILSCEKIDRSLLLEKLNQAGKLFTF</sequence>
<proteinExistence type="inferred from homology"/>
<gene>
    <name type="primary">tusC</name>
    <name type="ordered locus">HI_0576.1</name>
</gene>
<feature type="chain" id="PRO_0000214886" description="Protein TusC homolog">
    <location>
        <begin position="1"/>
        <end position="119"/>
    </location>
</feature>
<name>TUSC_HAEIN</name>